<proteinExistence type="evidence at protein level"/>
<gene>
    <name evidence="27" type="primary">Ldb3</name>
    <name type="synonym">Kiaa0613</name>
</gene>
<protein>
    <recommendedName>
        <fullName>LIM domain-binding protein 3</fullName>
    </recommendedName>
    <alternativeName>
        <fullName>Protein cypher</fullName>
    </alternativeName>
    <alternativeName>
        <fullName>Protein oracle</fullName>
    </alternativeName>
    <alternativeName>
        <fullName>Z-band alternatively spliced PDZ-motif protein</fullName>
    </alternativeName>
</protein>
<accession>Q9JKS4</accession>
<accession>B2RSB0</accession>
<accession>B7ZNT6</accession>
<accession>Q6A038</accession>
<accession>Q811P2</accession>
<accession>Q811P3</accession>
<accession>Q811P4</accession>
<accession>Q811P5</accession>
<accession>Q9D130</accession>
<accession>Q9JKS3</accession>
<accession>Q9R0Z1</accession>
<accession>Q9WVH1</accession>
<accession>Q9WVH2</accession>
<comment type="function">
    <text evidence="9">May function as an adapter in striated muscle to couple protein kinase C-mediated signaling via its LIM domains to the cytoskeleton.</text>
</comment>
<comment type="subunit">
    <text evidence="1 5">Interacts via its LIM domains with various PKC isoforms. Interacts via its PDZ domain with the ACTN2 C-terminal region. Interacts with MYOZ1, MYOZ2 and MYOZ3.</text>
</comment>
<comment type="subcellular location">
    <subcellularLocation>
        <location evidence="5">Cytoplasm</location>
        <location evidence="5">Perinuclear region</location>
    </subcellularLocation>
    <subcellularLocation>
        <location evidence="5">Cell projection</location>
        <location evidence="5">Pseudopodium</location>
    </subcellularLocation>
    <subcellularLocation>
        <location evidence="5">Cytoplasm</location>
        <location evidence="5">Cytoskeleton</location>
    </subcellularLocation>
    <subcellularLocation>
        <location evidence="5">Cytoplasm</location>
        <location evidence="5">Myofibril</location>
        <location evidence="5">Sarcomere</location>
        <location evidence="5">Z line</location>
    </subcellularLocation>
    <text>Localized to the cytoplasm around nuclei and pseudopodia of undifferentiated cells and detected throughout the myotubes of differentiated cells. Colocalizes with ACTN2 at the Z-lines.</text>
</comment>
<comment type="alternative products">
    <event type="alternative splicing"/>
    <isoform>
        <id>Q9JKS4-1</id>
        <name evidence="5">1</name>
        <name evidence="12">Cypher1c</name>
        <name evidence="11">Oracle 1</name>
        <sequence type="displayed"/>
    </isoform>
    <isoform>
        <id>Q9JKS4-2</id>
        <name evidence="8">2</name>
        <name evidence="12">Cypher1s</name>
        <sequence type="described" ref="VSP_051903"/>
    </isoform>
    <isoform>
        <id>Q9JKS4-3</id>
        <name evidence="6 8">3</name>
        <name evidence="12">Cypher3c</name>
        <name evidence="11">Oracle 2</name>
        <sequence type="described" ref="VSP_051904"/>
    </isoform>
    <isoform>
        <id>Q9JKS4-4</id>
        <name evidence="8">4</name>
        <name evidence="12">Cypher3s</name>
        <sequence type="described" ref="VSP_051903 VSP_051904"/>
    </isoform>
    <isoform>
        <id>Q9JKS4-5</id>
        <name evidence="8">5</name>
        <name evidence="12">Cypher2c</name>
        <sequence type="described" ref="VSP_051905 VSP_051906"/>
    </isoform>
    <isoform>
        <id>Q9JKS4-6</id>
        <name evidence="5 6">6</name>
        <name evidence="12">Cypher2s</name>
        <sequence type="described" ref="VSP_051903 VSP_051905 VSP_051906"/>
    </isoform>
</comment>
<comment type="tissue specificity">
    <text evidence="5 6 7 8">Expressed primarily in adult heart and skeletal muscle, and detected at lower levels in lung. Isoforms are expressed in a tissue-specific manner. Isoform 1, isoform 3 and isoform 5 are expressed in heart, whereas isoform 2, isoform 4 and isoform 6 are expressed in skeletal muscle.</text>
</comment>
<comment type="developmental stage">
    <text evidence="5 8">Initially expressed in a myocardium-specific manner at 8.5-9 dpc and remains cardiac-restricted until day 12. Strongly expressed throughout heart in all stages examined. At 12.5 dpc expressed at low levels in non-cardiac striated muscles. By 14.5 dpc expressed at high levels in both cardiac and skeletal muscle, and also strongly expressed in striated muscles of tongue, thoracic and abdominal muscles, leg and diaphragm. The various isoforms are developmentally regulated in both skeletal and cardiac muscle. Isoform 5 and isoform 6, which are barely detectable during embryogenesis are up-regulated postnatally. In heart, isoform 3 is up-regulated developmentally, whereas the predominant isoform 1 is expressed throughout development and into adulthood. In skeletal muscle, the predominant isoform 2 is gradually replaced by isoform 4 postnatally.</text>
</comment>
<comment type="sequence caution" evidence="16">
    <conflict type="miscellaneous discrepancy">
        <sequence resource="EMBL-CDS" id="BAB23128"/>
    </conflict>
    <text>Sequencing errors.</text>
</comment>
<comment type="sequence caution" evidence="16">
    <conflict type="erroneous initiation">
        <sequence resource="EMBL-CDS" id="BAD32258"/>
    </conflict>
</comment>
<dbReference type="EMBL" id="AF114378">
    <property type="protein sequence ID" value="AAD42950.2"/>
    <property type="molecule type" value="mRNA"/>
</dbReference>
<dbReference type="EMBL" id="AF114379">
    <property type="protein sequence ID" value="AAD42951.2"/>
    <property type="molecule type" value="mRNA"/>
</dbReference>
<dbReference type="EMBL" id="AJ005621">
    <property type="protein sequence ID" value="CAB46747.1"/>
    <property type="molecule type" value="mRNA"/>
</dbReference>
<dbReference type="EMBL" id="AF228057">
    <property type="protein sequence ID" value="AAF33847.1"/>
    <property type="molecule type" value="mRNA"/>
</dbReference>
<dbReference type="EMBL" id="AF228058">
    <property type="protein sequence ID" value="AAF33848.1"/>
    <property type="molecule type" value="mRNA"/>
</dbReference>
<dbReference type="EMBL" id="AY206011">
    <property type="protein sequence ID" value="AAO26187.1"/>
    <property type="molecule type" value="mRNA"/>
</dbReference>
<dbReference type="EMBL" id="AY206012">
    <property type="protein sequence ID" value="AAO26188.1"/>
    <property type="molecule type" value="mRNA"/>
</dbReference>
<dbReference type="EMBL" id="AY206013">
    <property type="protein sequence ID" value="AAO26189.1"/>
    <property type="molecule type" value="mRNA"/>
</dbReference>
<dbReference type="EMBL" id="AY206015">
    <property type="protein sequence ID" value="AAO26190.1"/>
    <property type="molecule type" value="mRNA"/>
</dbReference>
<dbReference type="EMBL" id="AK172980">
    <property type="protein sequence ID" value="BAD32258.1"/>
    <property type="status" value="ALT_INIT"/>
    <property type="molecule type" value="mRNA"/>
</dbReference>
<dbReference type="EMBL" id="AK004020">
    <property type="protein sequence ID" value="BAB23128.1"/>
    <property type="status" value="ALT_SEQ"/>
    <property type="molecule type" value="mRNA"/>
</dbReference>
<dbReference type="EMBL" id="AK137181">
    <property type="protein sequence ID" value="BAE23262.1"/>
    <property type="molecule type" value="mRNA"/>
</dbReference>
<dbReference type="EMBL" id="AK142292">
    <property type="protein sequence ID" value="BAE25016.1"/>
    <property type="molecule type" value="mRNA"/>
</dbReference>
<dbReference type="EMBL" id="BC099596">
    <property type="protein sequence ID" value="AAH99596.1"/>
    <property type="molecule type" value="mRNA"/>
</dbReference>
<dbReference type="EMBL" id="BC138793">
    <property type="protein sequence ID" value="AAI38794.1"/>
    <property type="molecule type" value="mRNA"/>
</dbReference>
<dbReference type="EMBL" id="BC145420">
    <property type="protein sequence ID" value="AAI45421.1"/>
    <property type="molecule type" value="mRNA"/>
</dbReference>
<dbReference type="CCDS" id="CCDS26940.1">
    <molecule id="Q9JKS4-3"/>
</dbReference>
<dbReference type="CCDS" id="CCDS26941.1">
    <molecule id="Q9JKS4-1"/>
</dbReference>
<dbReference type="CCDS" id="CCDS26942.1">
    <molecule id="Q9JKS4-5"/>
</dbReference>
<dbReference type="CCDS" id="CCDS36879.1">
    <molecule id="Q9JKS4-2"/>
</dbReference>
<dbReference type="CCDS" id="CCDS88626.1">
    <molecule id="Q9JKS4-4"/>
</dbReference>
<dbReference type="CCDS" id="CCDS88627.1">
    <molecule id="Q9JKS4-6"/>
</dbReference>
<dbReference type="RefSeq" id="NP_001034160.1">
    <molecule id="Q9JKS4-3"/>
    <property type="nucleotide sequence ID" value="NM_001039071.2"/>
</dbReference>
<dbReference type="RefSeq" id="NP_001034161.1">
    <property type="nucleotide sequence ID" value="NM_001039072.2"/>
</dbReference>
<dbReference type="RefSeq" id="NP_001034162.1">
    <molecule id="Q9JKS4-4"/>
    <property type="nucleotide sequence ID" value="NM_001039073.2"/>
</dbReference>
<dbReference type="RefSeq" id="NP_001034163.1">
    <molecule id="Q9JKS4-2"/>
    <property type="nucleotide sequence ID" value="NM_001039074.2"/>
</dbReference>
<dbReference type="RefSeq" id="NP_001034164.1">
    <molecule id="Q9JKS4-6"/>
    <property type="nucleotide sequence ID" value="NM_001039075.2"/>
</dbReference>
<dbReference type="RefSeq" id="NP_001034165.1">
    <molecule id="Q9JKS4-5"/>
    <property type="nucleotide sequence ID" value="NM_001039076.2"/>
</dbReference>
<dbReference type="RefSeq" id="NP_036048.3">
    <molecule id="Q9JKS4-1"/>
    <property type="nucleotide sequence ID" value="NM_011918.4"/>
</dbReference>
<dbReference type="RefSeq" id="XP_006519080.1">
    <molecule id="Q9JKS4-2"/>
    <property type="nucleotide sequence ID" value="XM_006519017.5"/>
</dbReference>
<dbReference type="RefSeq" id="XP_017171508.1">
    <molecule id="Q9JKS4-1"/>
    <property type="nucleotide sequence ID" value="XM_017316019.3"/>
</dbReference>
<dbReference type="PDB" id="1WJL">
    <property type="method" value="NMR"/>
    <property type="chains" value="A=1-83"/>
</dbReference>
<dbReference type="PDBsum" id="1WJL"/>
<dbReference type="BMRB" id="Q9JKS4"/>
<dbReference type="SMR" id="Q9JKS4"/>
<dbReference type="BioGRID" id="204912">
    <property type="interactions" value="17"/>
</dbReference>
<dbReference type="FunCoup" id="Q9JKS4">
    <property type="interactions" value="121"/>
</dbReference>
<dbReference type="IntAct" id="Q9JKS4">
    <property type="interactions" value="3"/>
</dbReference>
<dbReference type="MINT" id="Q9JKS4"/>
<dbReference type="STRING" id="10090.ENSMUSP00000022327"/>
<dbReference type="GlyGen" id="Q9JKS4">
    <property type="glycosylation" value="7 sites, 1 N-linked glycan (1 site), 1 O-linked glycan (3 sites)"/>
</dbReference>
<dbReference type="iPTMnet" id="Q9JKS4"/>
<dbReference type="PhosphoSitePlus" id="Q9JKS4"/>
<dbReference type="SwissPalm" id="Q9JKS4"/>
<dbReference type="jPOST" id="Q9JKS4"/>
<dbReference type="PaxDb" id="10090-ENSMUSP00000022327"/>
<dbReference type="PeptideAtlas" id="Q9JKS4"/>
<dbReference type="ProteomicsDB" id="264925">
    <molecule id="Q9JKS4-1"/>
</dbReference>
<dbReference type="ProteomicsDB" id="264926">
    <molecule id="Q9JKS4-2"/>
</dbReference>
<dbReference type="ProteomicsDB" id="264927">
    <molecule id="Q9JKS4-3"/>
</dbReference>
<dbReference type="ProteomicsDB" id="264928">
    <molecule id="Q9JKS4-4"/>
</dbReference>
<dbReference type="ProteomicsDB" id="264929">
    <molecule id="Q9JKS4-5"/>
</dbReference>
<dbReference type="ProteomicsDB" id="264930">
    <molecule id="Q9JKS4-6"/>
</dbReference>
<dbReference type="Antibodypedia" id="15974">
    <property type="antibodies" value="255 antibodies from 35 providers"/>
</dbReference>
<dbReference type="DNASU" id="24131"/>
<dbReference type="Ensembl" id="ENSMUST00000022327.13">
    <molecule id="Q9JKS4-1"/>
    <property type="protein sequence ID" value="ENSMUSP00000022327.6"/>
    <property type="gene ID" value="ENSMUSG00000021798.15"/>
</dbReference>
<dbReference type="Ensembl" id="ENSMUST00000022328.14">
    <molecule id="Q9JKS4-3"/>
    <property type="protein sequence ID" value="ENSMUSP00000022328.7"/>
    <property type="gene ID" value="ENSMUSG00000021798.15"/>
</dbReference>
<dbReference type="Ensembl" id="ENSMUST00000022330.9">
    <molecule id="Q9JKS4-5"/>
    <property type="protein sequence ID" value="ENSMUSP00000022330.8"/>
    <property type="gene ID" value="ENSMUSG00000021798.15"/>
</dbReference>
<dbReference type="Ensembl" id="ENSMUST00000090040.12">
    <molecule id="Q9JKS4-2"/>
    <property type="protein sequence ID" value="ENSMUSP00000087494.5"/>
    <property type="gene ID" value="ENSMUSG00000021798.15"/>
</dbReference>
<dbReference type="Ensembl" id="ENSMUST00000227819.2">
    <molecule id="Q9JKS4-6"/>
    <property type="protein sequence ID" value="ENSMUSP00000154119.2"/>
    <property type="gene ID" value="ENSMUSG00000021798.15"/>
</dbReference>
<dbReference type="Ensembl" id="ENSMUST00000228044.2">
    <molecule id="Q9JKS4-4"/>
    <property type="protein sequence ID" value="ENSMUSP00000154758.2"/>
    <property type="gene ID" value="ENSMUSG00000021798.15"/>
</dbReference>
<dbReference type="GeneID" id="24131"/>
<dbReference type="KEGG" id="mmu:24131"/>
<dbReference type="UCSC" id="uc007taz.1">
    <molecule id="Q9JKS4-2"/>
    <property type="organism name" value="mouse"/>
</dbReference>
<dbReference type="UCSC" id="uc007tba.1">
    <molecule id="Q9JKS4-4"/>
    <property type="organism name" value="mouse"/>
</dbReference>
<dbReference type="UCSC" id="uc007tbc.1">
    <molecule id="Q9JKS4-1"/>
    <property type="organism name" value="mouse"/>
</dbReference>
<dbReference type="UCSC" id="uc007tbd.1">
    <molecule id="Q9JKS4-3"/>
    <property type="organism name" value="mouse"/>
</dbReference>
<dbReference type="UCSC" id="uc007tbe.1">
    <molecule id="Q9JKS4-6"/>
    <property type="organism name" value="mouse"/>
</dbReference>
<dbReference type="UCSC" id="uc007tbf.1">
    <molecule id="Q9JKS4-5"/>
    <property type="organism name" value="mouse"/>
</dbReference>
<dbReference type="AGR" id="MGI:1344412"/>
<dbReference type="CTD" id="11155"/>
<dbReference type="MGI" id="MGI:1344412">
    <property type="gene designation" value="Ldb3"/>
</dbReference>
<dbReference type="VEuPathDB" id="HostDB:ENSMUSG00000021798"/>
<dbReference type="eggNOG" id="KOG1703">
    <property type="taxonomic scope" value="Eukaryota"/>
</dbReference>
<dbReference type="GeneTree" id="ENSGT00940000154877"/>
<dbReference type="HOGENOM" id="CLU_038114_0_0_1"/>
<dbReference type="InParanoid" id="Q9JKS4"/>
<dbReference type="OMA" id="ERGPMNT"/>
<dbReference type="OrthoDB" id="44841at2759"/>
<dbReference type="PhylomeDB" id="Q9JKS4"/>
<dbReference type="TreeFam" id="TF106408"/>
<dbReference type="BioGRID-ORCS" id="24131">
    <property type="hits" value="0 hits in 75 CRISPR screens"/>
</dbReference>
<dbReference type="ChiTaRS" id="Ldb3">
    <property type="organism name" value="mouse"/>
</dbReference>
<dbReference type="EvolutionaryTrace" id="Q9JKS4"/>
<dbReference type="PRO" id="PR:Q9JKS4"/>
<dbReference type="Proteomes" id="UP000000589">
    <property type="component" value="Chromosome 14"/>
</dbReference>
<dbReference type="RNAct" id="Q9JKS4">
    <property type="molecule type" value="protein"/>
</dbReference>
<dbReference type="Bgee" id="ENSMUSG00000021798">
    <property type="expression patterns" value="Expressed in triceps brachii and 222 other cell types or tissues"/>
</dbReference>
<dbReference type="ExpressionAtlas" id="Q9JKS4">
    <property type="expression patterns" value="baseline and differential"/>
</dbReference>
<dbReference type="GO" id="GO:0005856">
    <property type="term" value="C:cytoskeleton"/>
    <property type="evidence" value="ECO:0000250"/>
    <property type="project" value="UniProtKB"/>
</dbReference>
<dbReference type="GO" id="GO:0048471">
    <property type="term" value="C:perinuclear region of cytoplasm"/>
    <property type="evidence" value="ECO:0007669"/>
    <property type="project" value="UniProtKB-SubCell"/>
</dbReference>
<dbReference type="GO" id="GO:0031143">
    <property type="term" value="C:pseudopodium"/>
    <property type="evidence" value="ECO:0007669"/>
    <property type="project" value="UniProtKB-SubCell"/>
</dbReference>
<dbReference type="GO" id="GO:0030018">
    <property type="term" value="C:Z disc"/>
    <property type="evidence" value="ECO:0000314"/>
    <property type="project" value="MGI"/>
</dbReference>
<dbReference type="GO" id="GO:0046872">
    <property type="term" value="F:metal ion binding"/>
    <property type="evidence" value="ECO:0007669"/>
    <property type="project" value="UniProtKB-KW"/>
</dbReference>
<dbReference type="GO" id="GO:0051371">
    <property type="term" value="F:muscle alpha-actinin binding"/>
    <property type="evidence" value="ECO:0000314"/>
    <property type="project" value="MGI"/>
</dbReference>
<dbReference type="GO" id="GO:0005080">
    <property type="term" value="F:protein kinase C binding"/>
    <property type="evidence" value="ECO:0000314"/>
    <property type="project" value="UniProtKB"/>
</dbReference>
<dbReference type="GO" id="GO:0045214">
    <property type="term" value="P:sarcomere organization"/>
    <property type="evidence" value="ECO:0000315"/>
    <property type="project" value="MGI"/>
</dbReference>
<dbReference type="CDD" id="cd09454">
    <property type="entry name" value="LIM1_ZASP_Cypher"/>
    <property type="match status" value="1"/>
</dbReference>
<dbReference type="CDD" id="cd09362">
    <property type="entry name" value="LIM2_Enigma_like"/>
    <property type="match status" value="1"/>
</dbReference>
<dbReference type="CDD" id="cd09460">
    <property type="entry name" value="LIM3_ZASP_Cypher"/>
    <property type="match status" value="1"/>
</dbReference>
<dbReference type="CDD" id="cd06753">
    <property type="entry name" value="PDZ_PDLIM-like"/>
    <property type="match status" value="1"/>
</dbReference>
<dbReference type="FunFam" id="2.30.42.10:FF:000019">
    <property type="entry name" value="LIM domain binding 3 isoform 1"/>
    <property type="match status" value="1"/>
</dbReference>
<dbReference type="FunFam" id="2.10.110.10:FF:000010">
    <property type="entry name" value="PDZ and LIM domain protein 5"/>
    <property type="match status" value="1"/>
</dbReference>
<dbReference type="FunFam" id="2.10.110.10:FF:000014">
    <property type="entry name" value="PDZ and LIM domain protein 5"/>
    <property type="match status" value="1"/>
</dbReference>
<dbReference type="FunFam" id="2.10.110.10:FF:000020">
    <property type="entry name" value="PDZ and LIM domain protein 5"/>
    <property type="match status" value="1"/>
</dbReference>
<dbReference type="Gene3D" id="2.30.42.10">
    <property type="match status" value="1"/>
</dbReference>
<dbReference type="Gene3D" id="2.10.110.10">
    <property type="entry name" value="Cysteine Rich Protein"/>
    <property type="match status" value="3"/>
</dbReference>
<dbReference type="InterPro" id="IPR031847">
    <property type="entry name" value="PDLI1-4/Zasp-like_mid"/>
</dbReference>
<dbReference type="InterPro" id="IPR001478">
    <property type="entry name" value="PDZ"/>
</dbReference>
<dbReference type="InterPro" id="IPR050604">
    <property type="entry name" value="PDZ-LIM_domain"/>
</dbReference>
<dbReference type="InterPro" id="IPR036034">
    <property type="entry name" value="PDZ_sf"/>
</dbReference>
<dbReference type="InterPro" id="IPR006643">
    <property type="entry name" value="Zasp-like_motif"/>
</dbReference>
<dbReference type="InterPro" id="IPR001781">
    <property type="entry name" value="Znf_LIM"/>
</dbReference>
<dbReference type="PANTHER" id="PTHR24214:SF9">
    <property type="entry name" value="LIM DOMAIN-BINDING PROTEIN 3"/>
    <property type="match status" value="1"/>
</dbReference>
<dbReference type="PANTHER" id="PTHR24214">
    <property type="entry name" value="PDZ AND LIM DOMAIN PROTEIN ZASP"/>
    <property type="match status" value="1"/>
</dbReference>
<dbReference type="Pfam" id="PF15936">
    <property type="entry name" value="DUF4749"/>
    <property type="match status" value="1"/>
</dbReference>
<dbReference type="Pfam" id="PF00412">
    <property type="entry name" value="LIM"/>
    <property type="match status" value="3"/>
</dbReference>
<dbReference type="Pfam" id="PF00595">
    <property type="entry name" value="PDZ"/>
    <property type="match status" value="1"/>
</dbReference>
<dbReference type="SMART" id="SM00132">
    <property type="entry name" value="LIM"/>
    <property type="match status" value="3"/>
</dbReference>
<dbReference type="SMART" id="SM00228">
    <property type="entry name" value="PDZ"/>
    <property type="match status" value="1"/>
</dbReference>
<dbReference type="SMART" id="SM00735">
    <property type="entry name" value="ZM"/>
    <property type="match status" value="1"/>
</dbReference>
<dbReference type="SUPFAM" id="SSF57716">
    <property type="entry name" value="Glucocorticoid receptor-like (DNA-binding domain)"/>
    <property type="match status" value="4"/>
</dbReference>
<dbReference type="SUPFAM" id="SSF50156">
    <property type="entry name" value="PDZ domain-like"/>
    <property type="match status" value="1"/>
</dbReference>
<dbReference type="PROSITE" id="PS00478">
    <property type="entry name" value="LIM_DOMAIN_1"/>
    <property type="match status" value="2"/>
</dbReference>
<dbReference type="PROSITE" id="PS50023">
    <property type="entry name" value="LIM_DOMAIN_2"/>
    <property type="match status" value="3"/>
</dbReference>
<dbReference type="PROSITE" id="PS50106">
    <property type="entry name" value="PDZ"/>
    <property type="match status" value="1"/>
</dbReference>
<name>LDB3_MOUSE</name>
<evidence type="ECO:0000250" key="1">
    <source>
        <dbReference type="UniProtKB" id="O75112"/>
    </source>
</evidence>
<evidence type="ECO:0000255" key="2">
    <source>
        <dbReference type="PROSITE-ProRule" id="PRU00125"/>
    </source>
</evidence>
<evidence type="ECO:0000255" key="3">
    <source>
        <dbReference type="PROSITE-ProRule" id="PRU00143"/>
    </source>
</evidence>
<evidence type="ECO:0000256" key="4">
    <source>
        <dbReference type="SAM" id="MobiDB-lite"/>
    </source>
</evidence>
<evidence type="ECO:0000269" key="5">
    <source>
    </source>
</evidence>
<evidence type="ECO:0000269" key="6">
    <source>
    </source>
</evidence>
<evidence type="ECO:0000269" key="7">
    <source>
    </source>
</evidence>
<evidence type="ECO:0000269" key="8">
    <source>
    </source>
</evidence>
<evidence type="ECO:0000303" key="9">
    <source>
    </source>
</evidence>
<evidence type="ECO:0000303" key="10">
    <source>
    </source>
</evidence>
<evidence type="ECO:0000303" key="11">
    <source>
    </source>
</evidence>
<evidence type="ECO:0000303" key="12">
    <source>
    </source>
</evidence>
<evidence type="ECO:0000303" key="13">
    <source>
    </source>
</evidence>
<evidence type="ECO:0000303" key="14">
    <source>
    </source>
</evidence>
<evidence type="ECO:0000303" key="15">
    <source>
    </source>
</evidence>
<evidence type="ECO:0000305" key="16"/>
<evidence type="ECO:0000312" key="17">
    <source>
        <dbReference type="EMBL" id="AAD42950.2"/>
    </source>
</evidence>
<evidence type="ECO:0000312" key="18">
    <source>
        <dbReference type="EMBL" id="AAD42951.2"/>
    </source>
</evidence>
<evidence type="ECO:0000312" key="19">
    <source>
        <dbReference type="EMBL" id="AAF33847.1"/>
    </source>
</evidence>
<evidence type="ECO:0000312" key="20">
    <source>
        <dbReference type="EMBL" id="AAH99596.1"/>
    </source>
</evidence>
<evidence type="ECO:0000312" key="21">
    <source>
        <dbReference type="EMBL" id="AAO26188.1"/>
    </source>
</evidence>
<evidence type="ECO:0000312" key="22">
    <source>
        <dbReference type="EMBL" id="AAO26189.1"/>
    </source>
</evidence>
<evidence type="ECO:0000312" key="23">
    <source>
        <dbReference type="EMBL" id="BAD32258.1"/>
    </source>
</evidence>
<evidence type="ECO:0000312" key="24">
    <source>
        <dbReference type="EMBL" id="BAE23262.1"/>
    </source>
</evidence>
<evidence type="ECO:0000312" key="25">
    <source>
        <dbReference type="EMBL" id="BAE25016.1"/>
    </source>
</evidence>
<evidence type="ECO:0000312" key="26">
    <source>
        <dbReference type="EMBL" id="CAB46747.1"/>
    </source>
</evidence>
<evidence type="ECO:0000312" key="27">
    <source>
        <dbReference type="MGI" id="MGI:1344412"/>
    </source>
</evidence>
<evidence type="ECO:0007744" key="28">
    <source>
    </source>
</evidence>
<evidence type="ECO:0007744" key="29">
    <source>
    </source>
</evidence>
<evidence type="ECO:0007829" key="30">
    <source>
        <dbReference type="PDB" id="1WJL"/>
    </source>
</evidence>
<keyword id="KW-0002">3D-structure</keyword>
<keyword id="KW-0025">Alternative splicing</keyword>
<keyword id="KW-0966">Cell projection</keyword>
<keyword id="KW-0963">Cytoplasm</keyword>
<keyword id="KW-0206">Cytoskeleton</keyword>
<keyword id="KW-0440">LIM domain</keyword>
<keyword id="KW-0479">Metal-binding</keyword>
<keyword id="KW-0488">Methylation</keyword>
<keyword id="KW-0597">Phosphoprotein</keyword>
<keyword id="KW-1185">Reference proteome</keyword>
<keyword id="KW-0677">Repeat</keyword>
<keyword id="KW-0862">Zinc</keyword>
<organism>
    <name type="scientific">Mus musculus</name>
    <name type="common">Mouse</name>
    <dbReference type="NCBI Taxonomy" id="10090"/>
    <lineage>
        <taxon>Eukaryota</taxon>
        <taxon>Metazoa</taxon>
        <taxon>Chordata</taxon>
        <taxon>Craniata</taxon>
        <taxon>Vertebrata</taxon>
        <taxon>Euteleostomi</taxon>
        <taxon>Mammalia</taxon>
        <taxon>Eutheria</taxon>
        <taxon>Euarchontoglires</taxon>
        <taxon>Glires</taxon>
        <taxon>Rodentia</taxon>
        <taxon>Myomorpha</taxon>
        <taxon>Muroidea</taxon>
        <taxon>Muridae</taxon>
        <taxon>Murinae</taxon>
        <taxon>Mus</taxon>
        <taxon>Mus</taxon>
    </lineage>
</organism>
<feature type="chain" id="PRO_0000075768" description="LIM domain-binding protein 3">
    <location>
        <begin position="1"/>
        <end position="723"/>
    </location>
</feature>
<feature type="domain" description="PDZ" evidence="3">
    <location>
        <begin position="1"/>
        <end position="84"/>
    </location>
</feature>
<feature type="domain" description="LIM zinc-binding 1" evidence="2">
    <location>
        <begin position="545"/>
        <end position="603"/>
    </location>
</feature>
<feature type="domain" description="LIM zinc-binding 2" evidence="2">
    <location>
        <begin position="604"/>
        <end position="663"/>
    </location>
</feature>
<feature type="domain" description="LIM zinc-binding 3" evidence="2">
    <location>
        <begin position="664"/>
        <end position="723"/>
    </location>
</feature>
<feature type="region of interest" description="Disordered" evidence="4">
    <location>
        <begin position="89"/>
        <end position="134"/>
    </location>
</feature>
<feature type="region of interest" description="Disordered" evidence="4">
    <location>
        <begin position="164"/>
        <end position="193"/>
    </location>
</feature>
<feature type="region of interest" description="Disordered" evidence="4">
    <location>
        <begin position="280"/>
        <end position="423"/>
    </location>
</feature>
<feature type="region of interest" description="Disordered" evidence="4">
    <location>
        <begin position="436"/>
        <end position="525"/>
    </location>
</feature>
<feature type="compositionally biased region" description="Low complexity" evidence="4">
    <location>
        <begin position="309"/>
        <end position="376"/>
    </location>
</feature>
<feature type="compositionally biased region" description="Pro residues" evidence="4">
    <location>
        <begin position="436"/>
        <end position="466"/>
    </location>
</feature>
<feature type="compositionally biased region" description="Polar residues" evidence="4">
    <location>
        <begin position="490"/>
        <end position="509"/>
    </location>
</feature>
<feature type="modified residue" description="Phosphoserine" evidence="28">
    <location>
        <position position="44"/>
    </location>
</feature>
<feature type="modified residue" description="Phosphoserine" evidence="28">
    <location>
        <position position="98"/>
    </location>
</feature>
<feature type="modified residue" description="Phosphothreonine" evidence="28">
    <location>
        <position position="119"/>
    </location>
</feature>
<feature type="modified residue" description="Phosphoserine" evidence="28">
    <location>
        <position position="121"/>
    </location>
</feature>
<feature type="modified residue" description="Phosphoserine" evidence="28">
    <location>
        <position position="123"/>
    </location>
</feature>
<feature type="modified residue" description="Phosphoserine" evidence="28">
    <location>
        <position position="214"/>
    </location>
</feature>
<feature type="modified residue" description="Omega-N-methylarginine" evidence="29">
    <location>
        <position position="216"/>
    </location>
</feature>
<feature type="modified residue" description="Phosphoserine" evidence="28">
    <location>
        <position position="220"/>
    </location>
</feature>
<feature type="modified residue" description="Phosphoserine" evidence="28">
    <location>
        <position position="251"/>
    </location>
</feature>
<feature type="modified residue" description="Omega-N-methylarginine" evidence="29">
    <location>
        <position position="512"/>
    </location>
</feature>
<feature type="modified residue" description="Omega-N-methylarginine" evidence="29">
    <location>
        <position position="529"/>
    </location>
</feature>
<feature type="splice variant" id="VSP_051903" description="In isoform 2, isoform 4 and isoform 6." evidence="9 10 12 13 14">
    <original>DPALDTNGSLATPSPSPEARASPGALEFGDTFSSSFSQTSVCSPLMEASGPVLPLGSPVAKASSEGAQGSVSPKVLPGPSQPRQYNNPIGLYSAETLREMAQMYQMSLRGKASGAGLLGG</original>
    <variation>VVANSPANADYQERFNPSVLKDSALSTHKPIEVKGLGGKATIIHAQYNTPISMYSQDAIMDAIAGQAQAQGSDFSGASPLA</variation>
    <location>
        <begin position="108"/>
        <end position="227"/>
    </location>
</feature>
<feature type="splice variant" id="VSP_051904" description="In isoform 3 and isoform 4." evidence="11 12 14">
    <location>
        <begin position="296"/>
        <end position="357"/>
    </location>
</feature>
<feature type="splice variant" id="VSP_051905" description="In isoform 5 and isoform 6." evidence="9 10 12 14 15">
    <original>STPIEHAPVCTSQATSPLLPASAQSPAAASPI</original>
    <variation>RERFETERNSPRFAKLRNWHHGLSAQILNVKS</variation>
    <location>
        <begin position="296"/>
        <end position="327"/>
    </location>
</feature>
<feature type="splice variant" id="VSP_051906" description="In isoform 5 and isoform 6." evidence="9 10 12 14 15">
    <location>
        <begin position="328"/>
        <end position="723"/>
    </location>
</feature>
<feature type="sequence conflict" description="In Ref. 6; BAB23128." evidence="16" ref="6">
    <original>DPALDTNGSLATPSPSPEARASPGALEFGDTFSSSFSQ</original>
    <variation>VVANSPANADYQERFNPSVLKGLSSVLKGLSSVHPQAH</variation>
    <location>
        <begin position="108"/>
        <end position="145"/>
    </location>
</feature>
<feature type="sequence conflict" description="In Ref. 1; AAD42950 and 4; AAO26188/AAO26189." evidence="16" ref="1 4">
    <original>S</original>
    <variation>T</variation>
    <location>
        <position position="450"/>
    </location>
</feature>
<feature type="sequence conflict" description="In Ref. 5; BAD32258." evidence="16" ref="5">
    <original>R</original>
    <variation>W</variation>
    <location>
        <position position="512"/>
    </location>
</feature>
<feature type="strand" evidence="30">
    <location>
        <begin position="2"/>
        <end position="10"/>
    </location>
</feature>
<feature type="strand" evidence="30">
    <location>
        <begin position="15"/>
        <end position="17"/>
    </location>
</feature>
<feature type="turn" evidence="30">
    <location>
        <begin position="21"/>
        <end position="24"/>
    </location>
</feature>
<feature type="strand" evidence="30">
    <location>
        <begin position="28"/>
        <end position="32"/>
    </location>
</feature>
<feature type="helix" evidence="30">
    <location>
        <begin position="37"/>
        <end position="40"/>
    </location>
</feature>
<feature type="strand" evidence="30">
    <location>
        <begin position="48"/>
        <end position="54"/>
    </location>
</feature>
<feature type="strand" evidence="30">
    <location>
        <begin position="56"/>
        <end position="60"/>
    </location>
</feature>
<feature type="helix" evidence="30">
    <location>
        <begin position="62"/>
        <end position="71"/>
    </location>
</feature>
<feature type="strand" evidence="30">
    <location>
        <begin position="74"/>
        <end position="81"/>
    </location>
</feature>
<feature type="modified residue" description="Phosphoserine" evidence="28">
    <location sequence="Q9JKS4-2">
        <position position="112"/>
    </location>
</feature>
<feature type="sequence conflict" description="In Ref. 4; AAO26189." evidence="16" ref="4">
    <original>AQGSDFSGASPLA</original>
    <variation>AQGSDFSG</variation>
    <location sequence="Q9JKS4-2">
        <begin position="176"/>
        <end position="188"/>
    </location>
</feature>
<feature type="modified residue" description="Omega-N-methylarginine" evidence="29">
    <location sequence="Q9JKS4-3">
        <position position="330"/>
    </location>
</feature>
<feature type="modified residue" description="Phosphoserine" evidence="28">
    <location sequence="Q9JKS4-4">
        <position position="112"/>
    </location>
</feature>
<feature type="modified residue" description="Omega-N-methylarginine" evidence="29">
    <location sequence="Q9JKS4-4">
        <position position="291"/>
    </location>
</feature>
<feature type="modified residue" description="Phosphoserine" evidence="28">
    <location sequence="Q9JKS4-5">
        <position position="327"/>
    </location>
</feature>
<feature type="modified residue" description="Phosphoserine" evidence="28">
    <location sequence="Q9JKS4-6">
        <position position="112"/>
    </location>
</feature>
<feature type="modified residue" description="Phosphoserine" evidence="28">
    <location sequence="Q9JKS4-6">
        <position position="288"/>
    </location>
</feature>
<reference evidence="16 17" key="1">
    <citation type="journal article" date="1999" name="J. Biol. Chem.">
        <title>Cypher, a striated muscle-restricted PDZ and LIM domain-containing protein, binds to alpha-actinin-2 and protein kinase C.</title>
        <authorList>
            <person name="Zhou Q."/>
            <person name="Ruiz-Lozano P."/>
            <person name="Martone M.E."/>
            <person name="Chen J."/>
        </authorList>
    </citation>
    <scope>NUCLEOTIDE SEQUENCE [MRNA] (ISOFORMS 1 AND 6)</scope>
    <scope>INTERACTION WITH ACTN2 AND PKC</scope>
    <scope>SUBCELLULAR LOCATION</scope>
    <scope>TISSUE SPECIFICITY</scope>
    <scope>DEVELOPMENTAL STAGE</scope>
    <source>
        <strain evidence="17">NIH Swiss</strain>
        <tissue evidence="17">Heart</tissue>
        <tissue evidence="18">Skeletal muscle</tissue>
    </source>
</reference>
<reference evidence="16 26" key="2">
    <citation type="journal article" date="1999" name="J. Cell Biol.">
        <title>ZASP: a new Z-band alternatively spliced PDZ-motif protein.</title>
        <authorList>
            <person name="Faulkner G."/>
            <person name="Pallavicini A."/>
            <person name="Formentin E."/>
            <person name="Comelli A."/>
            <person name="Ievolella C."/>
            <person name="Trevisan S."/>
            <person name="Bortoletto G."/>
            <person name="Scannapieco P."/>
            <person name="Salamon M."/>
            <person name="Mouly V."/>
            <person name="Valle G."/>
            <person name="Lanfranchi G."/>
        </authorList>
    </citation>
    <scope>NUCLEOTIDE SEQUENCE [MRNA] (ISOFORM 6)</scope>
    <scope>TISSUE SPECIFICITY</scope>
    <source>
        <tissue evidence="26">Diaphragm</tissue>
    </source>
</reference>
<reference evidence="16 19" key="3">
    <citation type="journal article" date="2000" name="Mech. Dev.">
        <title>Oracle, a novel PDZ-LIM domain protein expressed in heart and skeletal muscle.</title>
        <authorList>
            <person name="Passier R."/>
            <person name="Richardson J.A."/>
            <person name="Olson E.N."/>
        </authorList>
    </citation>
    <scope>NUCLEOTIDE SEQUENCE [MRNA] (ISOFORMS 1 AND 3)</scope>
    <scope>TISSUE SPECIFICITY</scope>
    <source>
        <tissue evidence="19">Heart</tissue>
    </source>
</reference>
<reference evidence="16 22" key="4">
    <citation type="journal article" date="2003" name="J. Biol. Chem.">
        <title>Characterization and in vivo functional analysis of splice variants of cypher.</title>
        <authorList>
            <person name="Huang C."/>
            <person name="Zhou Q."/>
            <person name="Liang P."/>
            <person name="Hollander M.S."/>
            <person name="Sheikh F."/>
            <person name="Li X."/>
            <person name="Greaser M."/>
            <person name="Shelton G.D."/>
            <person name="Evans S."/>
            <person name="Chen J."/>
        </authorList>
    </citation>
    <scope>NUCLEOTIDE SEQUENCE [MRNA] (ISOFORMS 2; 3; 4 AND 5)</scope>
    <scope>TISSUE SPECIFICITY</scope>
    <scope>DEVELOPMENTAL STAGE</scope>
    <source>
        <strain evidence="22">NIH Swiss</strain>
        <tissue evidence="21">Heart</tissue>
        <tissue evidence="22">Skeletal muscle</tissue>
    </source>
</reference>
<reference evidence="16 23" key="5">
    <citation type="journal article" date="2004" name="DNA Res.">
        <title>Prediction of the coding sequences of mouse homologues of KIAA gene: IV. The complete nucleotide sequences of 500 mouse KIAA-homologous cDNAs identified by screening of terminal sequences of cDNA clones randomly sampled from size-fractionated libraries.</title>
        <authorList>
            <person name="Okazaki N."/>
            <person name="Kikuno R."/>
            <person name="Ohara R."/>
            <person name="Inamoto S."/>
            <person name="Koseki H."/>
            <person name="Hiraoka S."/>
            <person name="Saga Y."/>
            <person name="Seino S."/>
            <person name="Nishimura M."/>
            <person name="Kaisho T."/>
            <person name="Hoshino K."/>
            <person name="Kitamura H."/>
            <person name="Nagase T."/>
            <person name="Ohara O."/>
            <person name="Koga H."/>
        </authorList>
    </citation>
    <scope>NUCLEOTIDE SEQUENCE [LARGE SCALE MRNA] (ISOFORM 2)</scope>
    <source>
        <tissue evidence="23">Fetal brain</tissue>
    </source>
</reference>
<reference evidence="16 25" key="6">
    <citation type="journal article" date="2005" name="Science">
        <title>The transcriptional landscape of the mammalian genome.</title>
        <authorList>
            <person name="Carninci P."/>
            <person name="Kasukawa T."/>
            <person name="Katayama S."/>
            <person name="Gough J."/>
            <person name="Frith M.C."/>
            <person name="Maeda N."/>
            <person name="Oyama R."/>
            <person name="Ravasi T."/>
            <person name="Lenhard B."/>
            <person name="Wells C."/>
            <person name="Kodzius R."/>
            <person name="Shimokawa K."/>
            <person name="Bajic V.B."/>
            <person name="Brenner S.E."/>
            <person name="Batalov S."/>
            <person name="Forrest A.R."/>
            <person name="Zavolan M."/>
            <person name="Davis M.J."/>
            <person name="Wilming L.G."/>
            <person name="Aidinis V."/>
            <person name="Allen J.E."/>
            <person name="Ambesi-Impiombato A."/>
            <person name="Apweiler R."/>
            <person name="Aturaliya R.N."/>
            <person name="Bailey T.L."/>
            <person name="Bansal M."/>
            <person name="Baxter L."/>
            <person name="Beisel K.W."/>
            <person name="Bersano T."/>
            <person name="Bono H."/>
            <person name="Chalk A.M."/>
            <person name="Chiu K.P."/>
            <person name="Choudhary V."/>
            <person name="Christoffels A."/>
            <person name="Clutterbuck D.R."/>
            <person name="Crowe M.L."/>
            <person name="Dalla E."/>
            <person name="Dalrymple B.P."/>
            <person name="de Bono B."/>
            <person name="Della Gatta G."/>
            <person name="di Bernardo D."/>
            <person name="Down T."/>
            <person name="Engstrom P."/>
            <person name="Fagiolini M."/>
            <person name="Faulkner G."/>
            <person name="Fletcher C.F."/>
            <person name="Fukushima T."/>
            <person name="Furuno M."/>
            <person name="Futaki S."/>
            <person name="Gariboldi M."/>
            <person name="Georgii-Hemming P."/>
            <person name="Gingeras T.R."/>
            <person name="Gojobori T."/>
            <person name="Green R.E."/>
            <person name="Gustincich S."/>
            <person name="Harbers M."/>
            <person name="Hayashi Y."/>
            <person name="Hensch T.K."/>
            <person name="Hirokawa N."/>
            <person name="Hill D."/>
            <person name="Huminiecki L."/>
            <person name="Iacono M."/>
            <person name="Ikeo K."/>
            <person name="Iwama A."/>
            <person name="Ishikawa T."/>
            <person name="Jakt M."/>
            <person name="Kanapin A."/>
            <person name="Katoh M."/>
            <person name="Kawasawa Y."/>
            <person name="Kelso J."/>
            <person name="Kitamura H."/>
            <person name="Kitano H."/>
            <person name="Kollias G."/>
            <person name="Krishnan S.P."/>
            <person name="Kruger A."/>
            <person name="Kummerfeld S.K."/>
            <person name="Kurochkin I.V."/>
            <person name="Lareau L.F."/>
            <person name="Lazarevic D."/>
            <person name="Lipovich L."/>
            <person name="Liu J."/>
            <person name="Liuni S."/>
            <person name="McWilliam S."/>
            <person name="Madan Babu M."/>
            <person name="Madera M."/>
            <person name="Marchionni L."/>
            <person name="Matsuda H."/>
            <person name="Matsuzawa S."/>
            <person name="Miki H."/>
            <person name="Mignone F."/>
            <person name="Miyake S."/>
            <person name="Morris K."/>
            <person name="Mottagui-Tabar S."/>
            <person name="Mulder N."/>
            <person name="Nakano N."/>
            <person name="Nakauchi H."/>
            <person name="Ng P."/>
            <person name="Nilsson R."/>
            <person name="Nishiguchi S."/>
            <person name="Nishikawa S."/>
            <person name="Nori F."/>
            <person name="Ohara O."/>
            <person name="Okazaki Y."/>
            <person name="Orlando V."/>
            <person name="Pang K.C."/>
            <person name="Pavan W.J."/>
            <person name="Pavesi G."/>
            <person name="Pesole G."/>
            <person name="Petrovsky N."/>
            <person name="Piazza S."/>
            <person name="Reed J."/>
            <person name="Reid J.F."/>
            <person name="Ring B.Z."/>
            <person name="Ringwald M."/>
            <person name="Rost B."/>
            <person name="Ruan Y."/>
            <person name="Salzberg S.L."/>
            <person name="Sandelin A."/>
            <person name="Schneider C."/>
            <person name="Schoenbach C."/>
            <person name="Sekiguchi K."/>
            <person name="Semple C.A."/>
            <person name="Seno S."/>
            <person name="Sessa L."/>
            <person name="Sheng Y."/>
            <person name="Shibata Y."/>
            <person name="Shimada H."/>
            <person name="Shimada K."/>
            <person name="Silva D."/>
            <person name="Sinclair B."/>
            <person name="Sperling S."/>
            <person name="Stupka E."/>
            <person name="Sugiura K."/>
            <person name="Sultana R."/>
            <person name="Takenaka Y."/>
            <person name="Taki K."/>
            <person name="Tammoja K."/>
            <person name="Tan S.L."/>
            <person name="Tang S."/>
            <person name="Taylor M.S."/>
            <person name="Tegner J."/>
            <person name="Teichmann S.A."/>
            <person name="Ueda H.R."/>
            <person name="van Nimwegen E."/>
            <person name="Verardo R."/>
            <person name="Wei C.L."/>
            <person name="Yagi K."/>
            <person name="Yamanishi H."/>
            <person name="Zabarovsky E."/>
            <person name="Zhu S."/>
            <person name="Zimmer A."/>
            <person name="Hide W."/>
            <person name="Bult C."/>
            <person name="Grimmond S.M."/>
            <person name="Teasdale R.D."/>
            <person name="Liu E.T."/>
            <person name="Brusic V."/>
            <person name="Quackenbush J."/>
            <person name="Wahlestedt C."/>
            <person name="Mattick J.S."/>
            <person name="Hume D.A."/>
            <person name="Kai C."/>
            <person name="Sasaki D."/>
            <person name="Tomaru Y."/>
            <person name="Fukuda S."/>
            <person name="Kanamori-Katayama M."/>
            <person name="Suzuki M."/>
            <person name="Aoki J."/>
            <person name="Arakawa T."/>
            <person name="Iida J."/>
            <person name="Imamura K."/>
            <person name="Itoh M."/>
            <person name="Kato T."/>
            <person name="Kawaji H."/>
            <person name="Kawagashira N."/>
            <person name="Kawashima T."/>
            <person name="Kojima M."/>
            <person name="Kondo S."/>
            <person name="Konno H."/>
            <person name="Nakano K."/>
            <person name="Ninomiya N."/>
            <person name="Nishio T."/>
            <person name="Okada M."/>
            <person name="Plessy C."/>
            <person name="Shibata K."/>
            <person name="Shiraki T."/>
            <person name="Suzuki S."/>
            <person name="Tagami M."/>
            <person name="Waki K."/>
            <person name="Watahiki A."/>
            <person name="Okamura-Oho Y."/>
            <person name="Suzuki H."/>
            <person name="Kawai J."/>
            <person name="Hayashizaki Y."/>
        </authorList>
    </citation>
    <scope>NUCLEOTIDE SEQUENCE [LARGE SCALE MRNA] (ISOFORMS 1 AND 5)</scope>
    <scope>NUCLEOTIDE SEQUENCE [LARGE SCALE MRNA] OF 1-145</scope>
    <source>
        <strain evidence="25">C57BL/6J</strain>
        <tissue>Embryo</tissue>
        <tissue evidence="25">Heart</tissue>
        <tissue evidence="24">Urinary bladder</tissue>
    </source>
</reference>
<reference evidence="16 20" key="7">
    <citation type="journal article" date="2004" name="Genome Res.">
        <title>The status, quality, and expansion of the NIH full-length cDNA project: the Mammalian Gene Collection (MGC).</title>
        <authorList>
            <consortium name="The MGC Project Team"/>
        </authorList>
    </citation>
    <scope>NUCLEOTIDE SEQUENCE [LARGE SCALE MRNA] (ISOFORMS 1; 3 AND 6)</scope>
    <source>
        <strain evidence="20">C57BL/6J</strain>
        <tissue>Lung</tissue>
        <tissue evidence="20">Mammary gland</tissue>
    </source>
</reference>
<reference key="8">
    <citation type="journal article" date="2010" name="Cell">
        <title>A tissue-specific atlas of mouse protein phosphorylation and expression.</title>
        <authorList>
            <person name="Huttlin E.L."/>
            <person name="Jedrychowski M.P."/>
            <person name="Elias J.E."/>
            <person name="Goswami T."/>
            <person name="Rad R."/>
            <person name="Beausoleil S.A."/>
            <person name="Villen J."/>
            <person name="Haas W."/>
            <person name="Sowa M.E."/>
            <person name="Gygi S.P."/>
        </authorList>
    </citation>
    <scope>PHOSPHORYLATION [LARGE SCALE ANALYSIS] AT SER-44; SER-98; THR-119; SER-121; SER-123; SER-214; SER-220 AND SER-251</scope>
    <scope>PHOSPHORYLATION [LARGE SCALE ANALYSIS] AT SER-112 (ISOFORMS 2; 4 AND 6)</scope>
    <scope>PHOSPHORYLATION [LARGE SCALE ANALYSIS] AT SER-327 (ISOFORM 5)</scope>
    <scope>PHOSPHORYLATION [LARGE SCALE ANALYSIS] AT SER-288 (ISOFORM 6)</scope>
    <scope>IDENTIFICATION BY MASS SPECTROMETRY [LARGE SCALE ANALYSIS]</scope>
    <source>
        <tissue>Brown adipose tissue</tissue>
        <tissue>Heart</tissue>
        <tissue>Kidney</tissue>
        <tissue>Lung</tissue>
        <tissue>Spleen</tissue>
    </source>
</reference>
<reference key="9">
    <citation type="journal article" date="2014" name="Mol. Cell. Proteomics">
        <title>Immunoaffinity enrichment and mass spectrometry analysis of protein methylation.</title>
        <authorList>
            <person name="Guo A."/>
            <person name="Gu H."/>
            <person name="Zhou J."/>
            <person name="Mulhern D."/>
            <person name="Wang Y."/>
            <person name="Lee K.A."/>
            <person name="Yang V."/>
            <person name="Aguiar M."/>
            <person name="Kornhauser J."/>
            <person name="Jia X."/>
            <person name="Ren J."/>
            <person name="Beausoleil S.A."/>
            <person name="Silva J.C."/>
            <person name="Vemulapalli V."/>
            <person name="Bedford M.T."/>
            <person name="Comb M.J."/>
        </authorList>
    </citation>
    <scope>METHYLATION [LARGE SCALE ANALYSIS] AT ARG-216; ARG-512 AND ARG-529</scope>
    <scope>METHYLATION [LARGE SCALE ANALYSIS] AT ARG-330 (ISOFORM 3)</scope>
    <scope>METHYLATION [LARGE SCALE ANALYSIS] AT ARG-291 (ISOFORM 4)</scope>
    <scope>IDENTIFICATION BY MASS SPECTROMETRY [LARGE SCALE ANALYSIS]</scope>
    <source>
        <tissue>Brain</tissue>
    </source>
</reference>
<reference key="10">
    <citation type="submission" date="2004-05" db="PDB data bank">
        <title>Solution structure of PDZ domain of mouse cypher protein.</title>
        <authorList>
            <consortium name="RIKEN structural genomics initiative (RSGI)"/>
        </authorList>
    </citation>
    <scope>STRUCTURE BY NMR OF 1-83</scope>
</reference>
<sequence>MSYSVTLTGPGPWGFRLQGGKDFNMPLTISRITPGSKAAQSQLSQGDLVVAIDGVNTDTMTHLEAQNKIKSASYNLSLTLQKSKRPIPISTTAPPIQSPLPVIPHQKDPALDTNGSLATPSPSPEARASPGALEFGDTFSSSFSQTSVCSPLMEASGPVLPLGSPVAKASSEGAQGSVSPKVLPGPSQPRQYNNPIGLYSAETLREMAQMYQMSLRGKASGAGLLGGSLPVKDLAVDSASPVYQAVIKTQSKPEDEADEWARRSSNLQSRSFRILAQMTGTEYMQDPDEEALRRSSTPIEHAPVCTSQATSPLLPASAQSPAAASPIAASPTLATAAATHAAAASAAGPAASPVENPRPQASAYSPAAAASPAPSAHTSYSEGPAAPAPKPRVVTTASIRPSVYQPVPASSYSPSPGANYSPTPYTPSPAPAYTPSPAPTYTPSPAPTYSPSPAPAYTPSPAPNYTPTPSAAYSGGPSESASRPPWVTDDSFSQKFAPGKSTTTVSKQTLPRGAPAYNPTGPQVTPLARGTFQRAERFPASSRTPLCGHCNNVIRGPFLVAMGRSWHPEEFNCAYCKTSLADVCFVEEQNNVYCERCYEQFFAPICAKCNTKIMGEVMHALRQTWHTTCFVCAACKKPFGNSLFHMEDGEPYCEKDYINLFSTKCHGCDFPVEAGDKFIEALGHTWHDTCFICAVCHVNLEGQPFYSKKDKPLCKKHAHAINV</sequence>